<comment type="function">
    <text evidence="1">Prevents the cell division inhibition by proteins MinC and MinD at internal division sites while permitting inhibition at polar sites. This ensures cell division at the proper site by restricting the formation of a division septum at the midpoint of the long axis of the cell.</text>
</comment>
<comment type="similarity">
    <text evidence="1">Belongs to the MinE family.</text>
</comment>
<organism>
    <name type="scientific">Carboxydothermus hydrogenoformans (strain ATCC BAA-161 / DSM 6008 / Z-2901)</name>
    <dbReference type="NCBI Taxonomy" id="246194"/>
    <lineage>
        <taxon>Bacteria</taxon>
        <taxon>Bacillati</taxon>
        <taxon>Bacillota</taxon>
        <taxon>Clostridia</taxon>
        <taxon>Thermoanaerobacterales</taxon>
        <taxon>Thermoanaerobacteraceae</taxon>
        <taxon>Carboxydothermus</taxon>
    </lineage>
</organism>
<gene>
    <name evidence="1" type="primary">minE</name>
    <name type="ordered locus">CHY_0349</name>
</gene>
<dbReference type="EMBL" id="CP000141">
    <property type="protein sequence ID" value="ABB13695.1"/>
    <property type="molecule type" value="Genomic_DNA"/>
</dbReference>
<dbReference type="SMR" id="Q3AF72"/>
<dbReference type="STRING" id="246194.CHY_0349"/>
<dbReference type="KEGG" id="chy:CHY_0349"/>
<dbReference type="eggNOG" id="COG0851">
    <property type="taxonomic scope" value="Bacteria"/>
</dbReference>
<dbReference type="HOGENOM" id="CLU_137929_1_1_9"/>
<dbReference type="InParanoid" id="Q3AF72"/>
<dbReference type="OrthoDB" id="9796578at2"/>
<dbReference type="Proteomes" id="UP000002706">
    <property type="component" value="Chromosome"/>
</dbReference>
<dbReference type="GO" id="GO:0051301">
    <property type="term" value="P:cell division"/>
    <property type="evidence" value="ECO:0007669"/>
    <property type="project" value="UniProtKB-KW"/>
</dbReference>
<dbReference type="GO" id="GO:0032955">
    <property type="term" value="P:regulation of division septum assembly"/>
    <property type="evidence" value="ECO:0007669"/>
    <property type="project" value="InterPro"/>
</dbReference>
<dbReference type="Gene3D" id="3.30.1070.10">
    <property type="entry name" value="Cell division topological specificity factor MinE"/>
    <property type="match status" value="1"/>
</dbReference>
<dbReference type="HAMAP" id="MF_00262">
    <property type="entry name" value="MinE"/>
    <property type="match status" value="1"/>
</dbReference>
<dbReference type="InterPro" id="IPR005527">
    <property type="entry name" value="MinE"/>
</dbReference>
<dbReference type="InterPro" id="IPR036707">
    <property type="entry name" value="MinE_sf"/>
</dbReference>
<dbReference type="NCBIfam" id="TIGR01215">
    <property type="entry name" value="minE"/>
    <property type="match status" value="1"/>
</dbReference>
<dbReference type="NCBIfam" id="NF001422">
    <property type="entry name" value="PRK00296.1"/>
    <property type="match status" value="1"/>
</dbReference>
<dbReference type="Pfam" id="PF03776">
    <property type="entry name" value="MinE"/>
    <property type="match status" value="1"/>
</dbReference>
<dbReference type="SUPFAM" id="SSF55229">
    <property type="entry name" value="Cell division protein MinE topological specificity domain"/>
    <property type="match status" value="1"/>
</dbReference>
<protein>
    <recommendedName>
        <fullName evidence="1">Cell division topological specificity factor</fullName>
    </recommendedName>
</protein>
<evidence type="ECO:0000255" key="1">
    <source>
        <dbReference type="HAMAP-Rule" id="MF_00262"/>
    </source>
</evidence>
<proteinExistence type="inferred from homology"/>
<reference key="1">
    <citation type="journal article" date="2005" name="PLoS Genet.">
        <title>Life in hot carbon monoxide: the complete genome sequence of Carboxydothermus hydrogenoformans Z-2901.</title>
        <authorList>
            <person name="Wu M."/>
            <person name="Ren Q."/>
            <person name="Durkin A.S."/>
            <person name="Daugherty S.C."/>
            <person name="Brinkac L.M."/>
            <person name="Dodson R.J."/>
            <person name="Madupu R."/>
            <person name="Sullivan S.A."/>
            <person name="Kolonay J.F."/>
            <person name="Nelson W.C."/>
            <person name="Tallon L.J."/>
            <person name="Jones K.M."/>
            <person name="Ulrich L.E."/>
            <person name="Gonzalez J.M."/>
            <person name="Zhulin I.B."/>
            <person name="Robb F.T."/>
            <person name="Eisen J.A."/>
        </authorList>
    </citation>
    <scope>NUCLEOTIDE SEQUENCE [LARGE SCALE GENOMIC DNA]</scope>
    <source>
        <strain>ATCC BAA-161 / DSM 6008 / Z-2901</strain>
    </source>
</reference>
<sequence length="88" mass="10145">MKLFGKEQQNSKTMAKERLRLVLVQDRTNVSPELLQNLKEDLIAVITKYMEIDEKALEVNIDSHEDQVALIANIPIKNVKRSVRVQTN</sequence>
<keyword id="KW-0131">Cell cycle</keyword>
<keyword id="KW-0132">Cell division</keyword>
<keyword id="KW-1185">Reference proteome</keyword>
<accession>Q3AF72</accession>
<name>MINE_CARHZ</name>
<feature type="chain" id="PRO_0000298096" description="Cell division topological specificity factor">
    <location>
        <begin position="1"/>
        <end position="88"/>
    </location>
</feature>